<keyword id="KW-0002">3D-structure</keyword>
<keyword id="KW-0378">Hydrolase</keyword>
<keyword id="KW-0904">Protein phosphatase</keyword>
<keyword id="KW-1185">Reference proteome</keyword>
<dbReference type="EC" id="3.1.3.-"/>
<dbReference type="EMBL" id="D86298">
    <property type="protein sequence ID" value="BAA24878.1"/>
    <property type="molecule type" value="Genomic_DNA"/>
</dbReference>
<dbReference type="EMBL" id="U00096">
    <property type="protein sequence ID" value="AAC75400.1"/>
    <property type="molecule type" value="Genomic_DNA"/>
</dbReference>
<dbReference type="EMBL" id="AP009048">
    <property type="protein sequence ID" value="BAA16194.2"/>
    <property type="molecule type" value="Genomic_DNA"/>
</dbReference>
<dbReference type="PIR" id="B65007">
    <property type="entry name" value="B65007"/>
</dbReference>
<dbReference type="RefSeq" id="NP_416842.1">
    <property type="nucleotide sequence ID" value="NC_000913.3"/>
</dbReference>
<dbReference type="RefSeq" id="WP_001195819.1">
    <property type="nucleotide sequence ID" value="NZ_STEB01000008.1"/>
</dbReference>
<dbReference type="PDB" id="1UJB">
    <property type="method" value="X-ray"/>
    <property type="resolution" value="2.06 A"/>
    <property type="chains" value="A=1-161"/>
</dbReference>
<dbReference type="PDB" id="1UJC">
    <property type="method" value="X-ray"/>
    <property type="resolution" value="1.90 A"/>
    <property type="chains" value="A=1-161"/>
</dbReference>
<dbReference type="PDBsum" id="1UJB"/>
<dbReference type="PDBsum" id="1UJC"/>
<dbReference type="SMR" id="P76502"/>
<dbReference type="BioGRID" id="4260532">
    <property type="interactions" value="16"/>
</dbReference>
<dbReference type="BioGRID" id="851156">
    <property type="interactions" value="8"/>
</dbReference>
<dbReference type="DIP" id="DIP-10885N"/>
<dbReference type="FunCoup" id="P76502">
    <property type="interactions" value="150"/>
</dbReference>
<dbReference type="IntAct" id="P76502">
    <property type="interactions" value="10"/>
</dbReference>
<dbReference type="STRING" id="511145.b2340"/>
<dbReference type="jPOST" id="P76502"/>
<dbReference type="PaxDb" id="511145-b2340"/>
<dbReference type="EnsemblBacteria" id="AAC75400">
    <property type="protein sequence ID" value="AAC75400"/>
    <property type="gene ID" value="b2340"/>
</dbReference>
<dbReference type="GeneID" id="93774836"/>
<dbReference type="GeneID" id="946815"/>
<dbReference type="KEGG" id="ecj:JW2337"/>
<dbReference type="KEGG" id="eco:b2340"/>
<dbReference type="KEGG" id="ecoc:C3026_13025"/>
<dbReference type="PATRIC" id="fig|1411691.4.peg.4392"/>
<dbReference type="EchoBASE" id="EB3878"/>
<dbReference type="eggNOG" id="COG2062">
    <property type="taxonomic scope" value="Bacteria"/>
</dbReference>
<dbReference type="HOGENOM" id="CLU_084603_1_1_6"/>
<dbReference type="InParanoid" id="P76502"/>
<dbReference type="OMA" id="MQVLIMR"/>
<dbReference type="OrthoDB" id="92610at2"/>
<dbReference type="PhylomeDB" id="P76502"/>
<dbReference type="BioCyc" id="EcoCyc:G7211-MONOMER"/>
<dbReference type="BRENDA" id="3.9.1.3">
    <property type="organism ID" value="2026"/>
</dbReference>
<dbReference type="EvolutionaryTrace" id="P76502"/>
<dbReference type="PRO" id="PR:P76502"/>
<dbReference type="Proteomes" id="UP000000625">
    <property type="component" value="Chromosome"/>
</dbReference>
<dbReference type="GO" id="GO:0005737">
    <property type="term" value="C:cytoplasm"/>
    <property type="evidence" value="ECO:0000314"/>
    <property type="project" value="EcoliWiki"/>
</dbReference>
<dbReference type="GO" id="GO:0101006">
    <property type="term" value="F:protein histidine phosphatase activity"/>
    <property type="evidence" value="ECO:0000314"/>
    <property type="project" value="EcoliWiki"/>
</dbReference>
<dbReference type="GO" id="GO:0036211">
    <property type="term" value="P:protein modification process"/>
    <property type="evidence" value="ECO:0000315"/>
    <property type="project" value="EcoliWiki"/>
</dbReference>
<dbReference type="GO" id="GO:0070297">
    <property type="term" value="P:regulation of phosphorelay signal transduction system"/>
    <property type="evidence" value="ECO:0000315"/>
    <property type="project" value="EcoCyc"/>
</dbReference>
<dbReference type="CDD" id="cd07067">
    <property type="entry name" value="HP_PGM_like"/>
    <property type="match status" value="1"/>
</dbReference>
<dbReference type="FunFam" id="3.40.50.1240:FF:000004">
    <property type="entry name" value="Phosphohistidine phosphatase SixA"/>
    <property type="match status" value="1"/>
</dbReference>
<dbReference type="Gene3D" id="3.40.50.1240">
    <property type="entry name" value="Phosphoglycerate mutase-like"/>
    <property type="match status" value="1"/>
</dbReference>
<dbReference type="InterPro" id="IPR013078">
    <property type="entry name" value="His_Pase_superF_clade-1"/>
</dbReference>
<dbReference type="InterPro" id="IPR029033">
    <property type="entry name" value="His_PPase_superfam"/>
</dbReference>
<dbReference type="InterPro" id="IPR004449">
    <property type="entry name" value="SixA"/>
</dbReference>
<dbReference type="NCBIfam" id="TIGR00249">
    <property type="entry name" value="sixA"/>
    <property type="match status" value="1"/>
</dbReference>
<dbReference type="Pfam" id="PF00300">
    <property type="entry name" value="His_Phos_1"/>
    <property type="match status" value="1"/>
</dbReference>
<dbReference type="SUPFAM" id="SSF53254">
    <property type="entry name" value="Phosphoglycerate mutase-like"/>
    <property type="match status" value="1"/>
</dbReference>
<gene>
    <name type="primary">sixA</name>
    <name type="synonym">yfcW</name>
    <name type="ordered locus">b2340</name>
    <name type="ordered locus">JW2337</name>
</gene>
<proteinExistence type="evidence at protein level"/>
<comment type="function">
    <text>Exhibits phosphohistidine phosphatase activity towards the HPt domain of the ArcB sensor involved in the multistep His-Asp phosphorelay.</text>
</comment>
<comment type="interaction">
    <interactant intactId="EBI-548621">
        <id>P76502</id>
    </interactant>
    <interactant intactId="EBI-9154838">
        <id>Q2EES9</id>
        <label>torI</label>
    </interactant>
    <organismsDiffer>false</organismsDiffer>
    <experiments>3</experiments>
</comment>
<comment type="similarity">
    <text evidence="1">Belongs to the SixA phosphatase family.</text>
</comment>
<accession>P76502</accession>
<accession>P77784</accession>
<organism>
    <name type="scientific">Escherichia coli (strain K12)</name>
    <dbReference type="NCBI Taxonomy" id="83333"/>
    <lineage>
        <taxon>Bacteria</taxon>
        <taxon>Pseudomonadati</taxon>
        <taxon>Pseudomonadota</taxon>
        <taxon>Gammaproteobacteria</taxon>
        <taxon>Enterobacterales</taxon>
        <taxon>Enterobacteriaceae</taxon>
        <taxon>Escherichia</taxon>
    </lineage>
</organism>
<name>SIXA_ECOLI</name>
<feature type="chain" id="PRO_0000214568" description="Phosphohistidine phosphatase SixA">
    <location>
        <begin position="1"/>
        <end position="161"/>
    </location>
</feature>
<feature type="sequence conflict" description="In Ref. 2." evidence="1" ref="2">
    <original>T</original>
    <variation>K</variation>
    <location>
        <position position="80"/>
    </location>
</feature>
<feature type="strand" evidence="2">
    <location>
        <begin position="2"/>
        <end position="7"/>
    </location>
</feature>
<feature type="strand" evidence="2">
    <location>
        <begin position="15"/>
        <end position="17"/>
    </location>
</feature>
<feature type="helix" evidence="2">
    <location>
        <begin position="18"/>
        <end position="20"/>
    </location>
</feature>
<feature type="helix" evidence="2">
    <location>
        <begin position="25"/>
        <end position="40"/>
    </location>
</feature>
<feature type="strand" evidence="2">
    <location>
        <begin position="47"/>
        <end position="50"/>
    </location>
</feature>
<feature type="helix" evidence="2">
    <location>
        <begin position="54"/>
        <end position="66"/>
    </location>
</feature>
<feature type="helix" evidence="2">
    <location>
        <begin position="77"/>
        <end position="79"/>
    </location>
</feature>
<feature type="helix" evidence="2">
    <location>
        <begin position="85"/>
        <end position="98"/>
    </location>
</feature>
<feature type="strand" evidence="2">
    <location>
        <begin position="102"/>
        <end position="107"/>
    </location>
</feature>
<feature type="helix" evidence="2">
    <location>
        <begin position="111"/>
        <end position="119"/>
    </location>
</feature>
<feature type="strand" evidence="2">
    <location>
        <begin position="133"/>
        <end position="138"/>
    </location>
</feature>
<feature type="strand" evidence="2">
    <location>
        <begin position="144"/>
        <end position="150"/>
    </location>
</feature>
<feature type="helix" evidence="2">
    <location>
        <begin position="152"/>
        <end position="154"/>
    </location>
</feature>
<evidence type="ECO:0000305" key="1"/>
<evidence type="ECO:0007829" key="2">
    <source>
        <dbReference type="PDB" id="1UJC"/>
    </source>
</evidence>
<sequence length="161" mass="17208">MQVFIMRHGDAALDAASDSVRPLTTNGCDESRLMANWLKGQKVEIERVLVSPFLRAEQTLEEVGDCLNLPSSAEVLPELTPCGDVGLVSAYLQALTNEGVASVLVISHLPLVGYLVAELCPGETPPMFTTSAIASVTLDESGNGTFNWQMSPCNLKMAKAI</sequence>
<protein>
    <recommendedName>
        <fullName>Phosphohistidine phosphatase SixA</fullName>
        <ecNumber>3.1.3.-</ecNumber>
    </recommendedName>
    <alternativeName>
        <fullName>RX6</fullName>
    </alternativeName>
</protein>
<reference key="1">
    <citation type="journal article" date="1998" name="Mol. Microbiol.">
        <title>An Escherichia coli protein that exhibits phosphohistidine phosphatase activity towards the HPt domain of the ArcB sensor involved in the multistep His-Asp phosphorelay.</title>
        <authorList>
            <person name="Ogino H."/>
            <person name="Matsubara M."/>
            <person name="Kato N."/>
            <person name="Nakamura Y."/>
            <person name="Mizuno T."/>
        </authorList>
    </citation>
    <scope>NUCLEOTIDE SEQUENCE [GENOMIC DNA]</scope>
    <source>
        <strain>K12 / MC4100 / ATCC 35695 / DSM 6574</strain>
    </source>
</reference>
<reference key="2">
    <citation type="journal article" date="1997" name="DNA Res.">
        <title>Construction of a contiguous 874-kb sequence of the Escherichia coli-K12 genome corresponding to 50.0-68.8 min on the linkage map and analysis of its sequence features.</title>
        <authorList>
            <person name="Yamamoto Y."/>
            <person name="Aiba H."/>
            <person name="Baba T."/>
            <person name="Hayashi K."/>
            <person name="Inada T."/>
            <person name="Isono K."/>
            <person name="Itoh T."/>
            <person name="Kimura S."/>
            <person name="Kitagawa M."/>
            <person name="Makino K."/>
            <person name="Miki T."/>
            <person name="Mitsuhashi N."/>
            <person name="Mizobuchi K."/>
            <person name="Mori H."/>
            <person name="Nakade S."/>
            <person name="Nakamura Y."/>
            <person name="Nashimoto H."/>
            <person name="Oshima T."/>
            <person name="Oyama S."/>
            <person name="Saito N."/>
            <person name="Sampei G."/>
            <person name="Satoh Y."/>
            <person name="Sivasundaram S."/>
            <person name="Tagami H."/>
            <person name="Takahashi H."/>
            <person name="Takeda J."/>
            <person name="Takemoto K."/>
            <person name="Uehara K."/>
            <person name="Wada C."/>
            <person name="Yamagata S."/>
            <person name="Horiuchi T."/>
        </authorList>
    </citation>
    <scope>NUCLEOTIDE SEQUENCE [LARGE SCALE GENOMIC DNA]</scope>
    <source>
        <strain>K12 / W3110 / ATCC 27325 / DSM 5911</strain>
    </source>
</reference>
<reference key="3">
    <citation type="journal article" date="1997" name="Science">
        <title>The complete genome sequence of Escherichia coli K-12.</title>
        <authorList>
            <person name="Blattner F.R."/>
            <person name="Plunkett G. III"/>
            <person name="Bloch C.A."/>
            <person name="Perna N.T."/>
            <person name="Burland V."/>
            <person name="Riley M."/>
            <person name="Collado-Vides J."/>
            <person name="Glasner J.D."/>
            <person name="Rode C.K."/>
            <person name="Mayhew G.F."/>
            <person name="Gregor J."/>
            <person name="Davis N.W."/>
            <person name="Kirkpatrick H.A."/>
            <person name="Goeden M.A."/>
            <person name="Rose D.J."/>
            <person name="Mau B."/>
            <person name="Shao Y."/>
        </authorList>
    </citation>
    <scope>NUCLEOTIDE SEQUENCE [LARGE SCALE GENOMIC DNA]</scope>
    <source>
        <strain>K12 / MG1655 / ATCC 47076</strain>
    </source>
</reference>
<reference key="4">
    <citation type="journal article" date="2006" name="Mol. Syst. Biol.">
        <title>Highly accurate genome sequences of Escherichia coli K-12 strains MG1655 and W3110.</title>
        <authorList>
            <person name="Hayashi K."/>
            <person name="Morooka N."/>
            <person name="Yamamoto Y."/>
            <person name="Fujita K."/>
            <person name="Isono K."/>
            <person name="Choi S."/>
            <person name="Ohtsubo E."/>
            <person name="Baba T."/>
            <person name="Wanner B.L."/>
            <person name="Mori H."/>
            <person name="Horiuchi T."/>
        </authorList>
    </citation>
    <scope>NUCLEOTIDE SEQUENCE [LARGE SCALE GENOMIC DNA]</scope>
    <scope>SEQUENCE REVISION TO 80</scope>
    <source>
        <strain>K12 / W3110 / ATCC 27325 / DSM 5911</strain>
    </source>
</reference>